<protein>
    <recommendedName>
        <fullName evidence="1">Large ribosomal subunit protein uL14</fullName>
    </recommendedName>
    <alternativeName>
        <fullName evidence="2">50S ribosomal protein L14</fullName>
    </alternativeName>
</protein>
<accession>Q31IX2</accession>
<organism>
    <name type="scientific">Hydrogenovibrio crunogenus (strain DSM 25203 / XCL-2)</name>
    <name type="common">Thiomicrospira crunogena</name>
    <dbReference type="NCBI Taxonomy" id="317025"/>
    <lineage>
        <taxon>Bacteria</taxon>
        <taxon>Pseudomonadati</taxon>
        <taxon>Pseudomonadota</taxon>
        <taxon>Gammaproteobacteria</taxon>
        <taxon>Thiotrichales</taxon>
        <taxon>Piscirickettsiaceae</taxon>
        <taxon>Hydrogenovibrio</taxon>
    </lineage>
</organism>
<feature type="chain" id="PRO_0000266576" description="Large ribosomal subunit protein uL14">
    <location>
        <begin position="1"/>
        <end position="122"/>
    </location>
</feature>
<evidence type="ECO:0000255" key="1">
    <source>
        <dbReference type="HAMAP-Rule" id="MF_01367"/>
    </source>
</evidence>
<evidence type="ECO:0000305" key="2"/>
<gene>
    <name evidence="1" type="primary">rplN</name>
    <name type="ordered locus">Tcr_0305</name>
</gene>
<name>RL14_HYDCU</name>
<dbReference type="EMBL" id="CP000109">
    <property type="protein sequence ID" value="ABB40901.1"/>
    <property type="molecule type" value="Genomic_DNA"/>
</dbReference>
<dbReference type="SMR" id="Q31IX2"/>
<dbReference type="STRING" id="317025.Tcr_0305"/>
<dbReference type="KEGG" id="tcx:Tcr_0305"/>
<dbReference type="eggNOG" id="COG0093">
    <property type="taxonomic scope" value="Bacteria"/>
</dbReference>
<dbReference type="HOGENOM" id="CLU_095071_2_1_6"/>
<dbReference type="OrthoDB" id="9806379at2"/>
<dbReference type="GO" id="GO:0022625">
    <property type="term" value="C:cytosolic large ribosomal subunit"/>
    <property type="evidence" value="ECO:0007669"/>
    <property type="project" value="TreeGrafter"/>
</dbReference>
<dbReference type="GO" id="GO:0070180">
    <property type="term" value="F:large ribosomal subunit rRNA binding"/>
    <property type="evidence" value="ECO:0007669"/>
    <property type="project" value="TreeGrafter"/>
</dbReference>
<dbReference type="GO" id="GO:0003735">
    <property type="term" value="F:structural constituent of ribosome"/>
    <property type="evidence" value="ECO:0007669"/>
    <property type="project" value="InterPro"/>
</dbReference>
<dbReference type="GO" id="GO:0006412">
    <property type="term" value="P:translation"/>
    <property type="evidence" value="ECO:0007669"/>
    <property type="project" value="UniProtKB-UniRule"/>
</dbReference>
<dbReference type="CDD" id="cd00337">
    <property type="entry name" value="Ribosomal_uL14"/>
    <property type="match status" value="1"/>
</dbReference>
<dbReference type="FunFam" id="2.40.150.20:FF:000001">
    <property type="entry name" value="50S ribosomal protein L14"/>
    <property type="match status" value="1"/>
</dbReference>
<dbReference type="Gene3D" id="2.40.150.20">
    <property type="entry name" value="Ribosomal protein L14"/>
    <property type="match status" value="1"/>
</dbReference>
<dbReference type="HAMAP" id="MF_01367">
    <property type="entry name" value="Ribosomal_uL14"/>
    <property type="match status" value="1"/>
</dbReference>
<dbReference type="InterPro" id="IPR000218">
    <property type="entry name" value="Ribosomal_uL14"/>
</dbReference>
<dbReference type="InterPro" id="IPR005745">
    <property type="entry name" value="Ribosomal_uL14_bac-type"/>
</dbReference>
<dbReference type="InterPro" id="IPR019972">
    <property type="entry name" value="Ribosomal_uL14_CS"/>
</dbReference>
<dbReference type="InterPro" id="IPR036853">
    <property type="entry name" value="Ribosomal_uL14_sf"/>
</dbReference>
<dbReference type="NCBIfam" id="TIGR01067">
    <property type="entry name" value="rplN_bact"/>
    <property type="match status" value="1"/>
</dbReference>
<dbReference type="PANTHER" id="PTHR11761">
    <property type="entry name" value="50S/60S RIBOSOMAL PROTEIN L14/L23"/>
    <property type="match status" value="1"/>
</dbReference>
<dbReference type="PANTHER" id="PTHR11761:SF3">
    <property type="entry name" value="LARGE RIBOSOMAL SUBUNIT PROTEIN UL14M"/>
    <property type="match status" value="1"/>
</dbReference>
<dbReference type="Pfam" id="PF00238">
    <property type="entry name" value="Ribosomal_L14"/>
    <property type="match status" value="1"/>
</dbReference>
<dbReference type="SMART" id="SM01374">
    <property type="entry name" value="Ribosomal_L14"/>
    <property type="match status" value="1"/>
</dbReference>
<dbReference type="SUPFAM" id="SSF50193">
    <property type="entry name" value="Ribosomal protein L14"/>
    <property type="match status" value="1"/>
</dbReference>
<dbReference type="PROSITE" id="PS00049">
    <property type="entry name" value="RIBOSOMAL_L14"/>
    <property type="match status" value="1"/>
</dbReference>
<proteinExistence type="inferred from homology"/>
<comment type="function">
    <text evidence="1">Binds to 23S rRNA. Forms part of two intersubunit bridges in the 70S ribosome.</text>
</comment>
<comment type="subunit">
    <text evidence="1">Part of the 50S ribosomal subunit. Forms a cluster with proteins L3 and L19. In the 70S ribosome, L14 and L19 interact and together make contacts with the 16S rRNA in bridges B5 and B8.</text>
</comment>
<comment type="similarity">
    <text evidence="1">Belongs to the universal ribosomal protein uL14 family.</text>
</comment>
<keyword id="KW-0687">Ribonucleoprotein</keyword>
<keyword id="KW-0689">Ribosomal protein</keyword>
<keyword id="KW-0694">RNA-binding</keyword>
<keyword id="KW-0699">rRNA-binding</keyword>
<sequence>MIQMQTVLDVADNSGARKVQCIKVLGGSKRRYASVGDVIKVAVKEAAPRGKVKKGDVFDAVVVRTAQGVRRPDGSKIKFDGNAAVILNTKLEPIGTRIFGPVTRELRNDKFMKIVSLAPEVL</sequence>
<reference key="1">
    <citation type="journal article" date="2006" name="PLoS Biol.">
        <title>The genome of deep-sea vent chemolithoautotroph Thiomicrospira crunogena XCL-2.</title>
        <authorList>
            <person name="Scott K.M."/>
            <person name="Sievert S.M."/>
            <person name="Abril F.N."/>
            <person name="Ball L.A."/>
            <person name="Barrett C.J."/>
            <person name="Blake R.A."/>
            <person name="Boller A.J."/>
            <person name="Chain P.S.G."/>
            <person name="Clark J.A."/>
            <person name="Davis C.R."/>
            <person name="Detter C."/>
            <person name="Do K.F."/>
            <person name="Dobrinski K.P."/>
            <person name="Faza B.I."/>
            <person name="Fitzpatrick K.A."/>
            <person name="Freyermuth S.K."/>
            <person name="Harmer T.L."/>
            <person name="Hauser L.J."/>
            <person name="Huegler M."/>
            <person name="Kerfeld C.A."/>
            <person name="Klotz M.G."/>
            <person name="Kong W.W."/>
            <person name="Land M."/>
            <person name="Lapidus A."/>
            <person name="Larimer F.W."/>
            <person name="Longo D.L."/>
            <person name="Lucas S."/>
            <person name="Malfatti S.A."/>
            <person name="Massey S.E."/>
            <person name="Martin D.D."/>
            <person name="McCuddin Z."/>
            <person name="Meyer F."/>
            <person name="Moore J.L."/>
            <person name="Ocampo L.H. Jr."/>
            <person name="Paul J.H."/>
            <person name="Paulsen I.T."/>
            <person name="Reep D.K."/>
            <person name="Ren Q."/>
            <person name="Ross R.L."/>
            <person name="Sato P.Y."/>
            <person name="Thomas P."/>
            <person name="Tinkham L.E."/>
            <person name="Zeruth G.T."/>
        </authorList>
    </citation>
    <scope>NUCLEOTIDE SEQUENCE [LARGE SCALE GENOMIC DNA]</scope>
    <source>
        <strain>DSM 25203 / XCL-2</strain>
    </source>
</reference>